<dbReference type="EMBL" id="CP000681">
    <property type="protein sequence ID" value="ABP77440.1"/>
    <property type="molecule type" value="Genomic_DNA"/>
</dbReference>
<dbReference type="SMR" id="A4YBV7"/>
<dbReference type="STRING" id="319224.Sputcn32_3733"/>
<dbReference type="KEGG" id="spc:Sputcn32_3733"/>
<dbReference type="eggNOG" id="COG0203">
    <property type="taxonomic scope" value="Bacteria"/>
</dbReference>
<dbReference type="HOGENOM" id="CLU_074407_2_0_6"/>
<dbReference type="GO" id="GO:0022625">
    <property type="term" value="C:cytosolic large ribosomal subunit"/>
    <property type="evidence" value="ECO:0007669"/>
    <property type="project" value="TreeGrafter"/>
</dbReference>
<dbReference type="GO" id="GO:0003735">
    <property type="term" value="F:structural constituent of ribosome"/>
    <property type="evidence" value="ECO:0007669"/>
    <property type="project" value="InterPro"/>
</dbReference>
<dbReference type="GO" id="GO:0006412">
    <property type="term" value="P:translation"/>
    <property type="evidence" value="ECO:0007669"/>
    <property type="project" value="UniProtKB-UniRule"/>
</dbReference>
<dbReference type="FunFam" id="3.90.1030.10:FF:000001">
    <property type="entry name" value="50S ribosomal protein L17"/>
    <property type="match status" value="1"/>
</dbReference>
<dbReference type="Gene3D" id="3.90.1030.10">
    <property type="entry name" value="Ribosomal protein L17"/>
    <property type="match status" value="1"/>
</dbReference>
<dbReference type="HAMAP" id="MF_01368">
    <property type="entry name" value="Ribosomal_bL17"/>
    <property type="match status" value="1"/>
</dbReference>
<dbReference type="InterPro" id="IPR000456">
    <property type="entry name" value="Ribosomal_bL17"/>
</dbReference>
<dbReference type="InterPro" id="IPR047859">
    <property type="entry name" value="Ribosomal_bL17_CS"/>
</dbReference>
<dbReference type="InterPro" id="IPR036373">
    <property type="entry name" value="Ribosomal_bL17_sf"/>
</dbReference>
<dbReference type="NCBIfam" id="TIGR00059">
    <property type="entry name" value="L17"/>
    <property type="match status" value="1"/>
</dbReference>
<dbReference type="PANTHER" id="PTHR14413:SF16">
    <property type="entry name" value="LARGE RIBOSOMAL SUBUNIT PROTEIN BL17M"/>
    <property type="match status" value="1"/>
</dbReference>
<dbReference type="PANTHER" id="PTHR14413">
    <property type="entry name" value="RIBOSOMAL PROTEIN L17"/>
    <property type="match status" value="1"/>
</dbReference>
<dbReference type="Pfam" id="PF01196">
    <property type="entry name" value="Ribosomal_L17"/>
    <property type="match status" value="1"/>
</dbReference>
<dbReference type="SUPFAM" id="SSF64263">
    <property type="entry name" value="Prokaryotic ribosomal protein L17"/>
    <property type="match status" value="1"/>
</dbReference>
<dbReference type="PROSITE" id="PS01167">
    <property type="entry name" value="RIBOSOMAL_L17"/>
    <property type="match status" value="1"/>
</dbReference>
<reference key="1">
    <citation type="submission" date="2007-04" db="EMBL/GenBank/DDBJ databases">
        <title>Complete sequence of Shewanella putrefaciens CN-32.</title>
        <authorList>
            <consortium name="US DOE Joint Genome Institute"/>
            <person name="Copeland A."/>
            <person name="Lucas S."/>
            <person name="Lapidus A."/>
            <person name="Barry K."/>
            <person name="Detter J.C."/>
            <person name="Glavina del Rio T."/>
            <person name="Hammon N."/>
            <person name="Israni S."/>
            <person name="Dalin E."/>
            <person name="Tice H."/>
            <person name="Pitluck S."/>
            <person name="Chain P."/>
            <person name="Malfatti S."/>
            <person name="Shin M."/>
            <person name="Vergez L."/>
            <person name="Schmutz J."/>
            <person name="Larimer F."/>
            <person name="Land M."/>
            <person name="Hauser L."/>
            <person name="Kyrpides N."/>
            <person name="Mikhailova N."/>
            <person name="Romine M.F."/>
            <person name="Fredrickson J."/>
            <person name="Tiedje J."/>
            <person name="Richardson P."/>
        </authorList>
    </citation>
    <scope>NUCLEOTIDE SEQUENCE [LARGE SCALE GENOMIC DNA]</scope>
    <source>
        <strain>CN-32 / ATCC BAA-453</strain>
    </source>
</reference>
<evidence type="ECO:0000255" key="1">
    <source>
        <dbReference type="HAMAP-Rule" id="MF_01368"/>
    </source>
</evidence>
<evidence type="ECO:0000305" key="2"/>
<keyword id="KW-0687">Ribonucleoprotein</keyword>
<keyword id="KW-0689">Ribosomal protein</keyword>
<proteinExistence type="inferred from homology"/>
<sequence>MRHRKSGRQLNRNSSHRQAMFRNMASSLVRHEIIKTTVAKAKELRRVVEPLITLAKSDSVANRRLAFARTRDAEVVGKLFTELGPRYQERPGGYTRILKCGLRAGDKAPMAYIELVGRPEAAQAVDVEAAE</sequence>
<protein>
    <recommendedName>
        <fullName evidence="1">Large ribosomal subunit protein bL17</fullName>
    </recommendedName>
    <alternativeName>
        <fullName evidence="2">50S ribosomal protein L17</fullName>
    </alternativeName>
</protein>
<organism>
    <name type="scientific">Shewanella putrefaciens (strain CN-32 / ATCC BAA-453)</name>
    <dbReference type="NCBI Taxonomy" id="319224"/>
    <lineage>
        <taxon>Bacteria</taxon>
        <taxon>Pseudomonadati</taxon>
        <taxon>Pseudomonadota</taxon>
        <taxon>Gammaproteobacteria</taxon>
        <taxon>Alteromonadales</taxon>
        <taxon>Shewanellaceae</taxon>
        <taxon>Shewanella</taxon>
    </lineage>
</organism>
<name>RL17_SHEPC</name>
<accession>A4YBV7</accession>
<comment type="subunit">
    <text evidence="1">Part of the 50S ribosomal subunit. Contacts protein L32.</text>
</comment>
<comment type="similarity">
    <text evidence="1">Belongs to the bacterial ribosomal protein bL17 family.</text>
</comment>
<gene>
    <name evidence="1" type="primary">rplQ</name>
    <name type="ordered locus">Sputcn32_3733</name>
</gene>
<feature type="chain" id="PRO_1000055942" description="Large ribosomal subunit protein bL17">
    <location>
        <begin position="1"/>
        <end position="131"/>
    </location>
</feature>